<accession>Q8MIN2</accession>
<dbReference type="EMBL" id="AY114351">
    <property type="protein sequence ID" value="AAM76679.1"/>
    <property type="molecule type" value="mRNA"/>
</dbReference>
<dbReference type="RefSeq" id="NP_001075355.2">
    <property type="nucleotide sequence ID" value="NM_001081886.2"/>
</dbReference>
<dbReference type="SMR" id="Q8MIN2"/>
<dbReference type="FunCoup" id="Q8MIN2">
    <property type="interactions" value="351"/>
</dbReference>
<dbReference type="STRING" id="9796.ENSECAP00000010532"/>
<dbReference type="PaxDb" id="9796-ENSECAP00000010532"/>
<dbReference type="GeneID" id="100033988"/>
<dbReference type="KEGG" id="ecb:100033988"/>
<dbReference type="CTD" id="6372"/>
<dbReference type="InParanoid" id="Q8MIN2"/>
<dbReference type="OrthoDB" id="8872899at2759"/>
<dbReference type="Proteomes" id="UP000002281">
    <property type="component" value="Unplaced"/>
</dbReference>
<dbReference type="GO" id="GO:0005615">
    <property type="term" value="C:extracellular space"/>
    <property type="evidence" value="ECO:0000318"/>
    <property type="project" value="GO_Central"/>
</dbReference>
<dbReference type="GO" id="GO:0008009">
    <property type="term" value="F:chemokine activity"/>
    <property type="evidence" value="ECO:0000318"/>
    <property type="project" value="GO_Central"/>
</dbReference>
<dbReference type="GO" id="GO:0045236">
    <property type="term" value="F:CXCR chemokine receptor binding"/>
    <property type="evidence" value="ECO:0000318"/>
    <property type="project" value="GO_Central"/>
</dbReference>
<dbReference type="GO" id="GO:0008201">
    <property type="term" value="F:heparin binding"/>
    <property type="evidence" value="ECO:0007669"/>
    <property type="project" value="UniProtKB-KW"/>
</dbReference>
<dbReference type="GO" id="GO:0061844">
    <property type="term" value="P:antimicrobial humoral immune response mediated by antimicrobial peptide"/>
    <property type="evidence" value="ECO:0000318"/>
    <property type="project" value="GO_Central"/>
</dbReference>
<dbReference type="GO" id="GO:0071222">
    <property type="term" value="P:cellular response to lipopolysaccharide"/>
    <property type="evidence" value="ECO:0000318"/>
    <property type="project" value="GO_Central"/>
</dbReference>
<dbReference type="GO" id="GO:0042742">
    <property type="term" value="P:defense response to bacterium"/>
    <property type="evidence" value="ECO:0007669"/>
    <property type="project" value="UniProtKB-KW"/>
</dbReference>
<dbReference type="GO" id="GO:0006954">
    <property type="term" value="P:inflammatory response"/>
    <property type="evidence" value="ECO:0000318"/>
    <property type="project" value="GO_Central"/>
</dbReference>
<dbReference type="GO" id="GO:0030593">
    <property type="term" value="P:neutrophil chemotaxis"/>
    <property type="evidence" value="ECO:0000318"/>
    <property type="project" value="GO_Central"/>
</dbReference>
<dbReference type="CDD" id="cd00273">
    <property type="entry name" value="Chemokine_CXC"/>
    <property type="match status" value="1"/>
</dbReference>
<dbReference type="FunFam" id="2.40.50.40:FF:000004">
    <property type="entry name" value="C-X-C motif chemokine"/>
    <property type="match status" value="1"/>
</dbReference>
<dbReference type="Gene3D" id="2.40.50.40">
    <property type="match status" value="1"/>
</dbReference>
<dbReference type="InterPro" id="IPR039809">
    <property type="entry name" value="Chemokine_b/g/d"/>
</dbReference>
<dbReference type="InterPro" id="IPR001089">
    <property type="entry name" value="Chemokine_CXC"/>
</dbReference>
<dbReference type="InterPro" id="IPR018048">
    <property type="entry name" value="Chemokine_CXC_CS"/>
</dbReference>
<dbReference type="InterPro" id="IPR001811">
    <property type="entry name" value="Chemokine_IL8-like_dom"/>
</dbReference>
<dbReference type="InterPro" id="IPR033899">
    <property type="entry name" value="CXC_Chemokine_domain"/>
</dbReference>
<dbReference type="InterPro" id="IPR036048">
    <property type="entry name" value="Interleukin_8-like_sf"/>
</dbReference>
<dbReference type="PANTHER" id="PTHR12015:SF201">
    <property type="entry name" value="C-X-C MOTIF CHEMOKINE 6"/>
    <property type="match status" value="1"/>
</dbReference>
<dbReference type="PANTHER" id="PTHR12015">
    <property type="entry name" value="SMALL INDUCIBLE CYTOKINE A"/>
    <property type="match status" value="1"/>
</dbReference>
<dbReference type="Pfam" id="PF00048">
    <property type="entry name" value="IL8"/>
    <property type="match status" value="1"/>
</dbReference>
<dbReference type="PRINTS" id="PR00436">
    <property type="entry name" value="INTERLEUKIN8"/>
</dbReference>
<dbReference type="PRINTS" id="PR00437">
    <property type="entry name" value="SMALLCYTKCXC"/>
</dbReference>
<dbReference type="SMART" id="SM00199">
    <property type="entry name" value="SCY"/>
    <property type="match status" value="1"/>
</dbReference>
<dbReference type="SUPFAM" id="SSF54117">
    <property type="entry name" value="Interleukin 8-like chemokines"/>
    <property type="match status" value="1"/>
</dbReference>
<dbReference type="PROSITE" id="PS00471">
    <property type="entry name" value="SMALL_CYTOKINES_CXC"/>
    <property type="match status" value="1"/>
</dbReference>
<organism>
    <name type="scientific">Equus caballus</name>
    <name type="common">Horse</name>
    <dbReference type="NCBI Taxonomy" id="9796"/>
    <lineage>
        <taxon>Eukaryota</taxon>
        <taxon>Metazoa</taxon>
        <taxon>Chordata</taxon>
        <taxon>Craniata</taxon>
        <taxon>Vertebrata</taxon>
        <taxon>Euteleostomi</taxon>
        <taxon>Mammalia</taxon>
        <taxon>Eutheria</taxon>
        <taxon>Laurasiatheria</taxon>
        <taxon>Perissodactyla</taxon>
        <taxon>Equidae</taxon>
        <taxon>Equus</taxon>
    </lineage>
</organism>
<reference key="1">
    <citation type="submission" date="2002-05" db="EMBL/GenBank/DDBJ databases">
        <authorList>
            <person name="Takafuji V.A."/>
            <person name="Sharova L.V."/>
            <person name="Crisman M.V."/>
            <person name="Howard R.D."/>
        </authorList>
    </citation>
    <scope>NUCLEOTIDE SEQUENCE [MRNA]</scope>
</reference>
<sequence>MSLLPSRAARVPGPSSSLCALLALLLLTPPGPLVSAGPVAAAVRELRCMCLTVTPGIHPKMISSLQVFAVGPQCSKVEVVPTLKNKKEVCLDPEAPLIKKFIQKTLDSGNKKN</sequence>
<keyword id="KW-0044">Antibiotic</keyword>
<keyword id="KW-0929">Antimicrobial</keyword>
<keyword id="KW-0145">Chemotaxis</keyword>
<keyword id="KW-0202">Cytokine</keyword>
<keyword id="KW-1015">Disulfide bond</keyword>
<keyword id="KW-0358">Heparin-binding</keyword>
<keyword id="KW-1185">Reference proteome</keyword>
<keyword id="KW-0964">Secreted</keyword>
<keyword id="KW-0732">Signal</keyword>
<name>CXCL6_HORSE</name>
<evidence type="ECO:0000250" key="1"/>
<evidence type="ECO:0000305" key="2"/>
<protein>
    <recommendedName>
        <fullName>C-X-C motif chemokine 6</fullName>
    </recommendedName>
    <alternativeName>
        <fullName>Granulocyte chemotactic protein 2</fullName>
        <shortName>GCP-2</shortName>
    </alternativeName>
    <alternativeName>
        <fullName>Small-inducible cytokine B6</fullName>
    </alternativeName>
</protein>
<feature type="signal peptide" evidence="1">
    <location>
        <begin position="1"/>
        <end position="36"/>
    </location>
</feature>
<feature type="chain" id="PRO_0000005083" description="C-X-C motif chemokine 6">
    <location>
        <begin position="37"/>
        <end position="113"/>
    </location>
</feature>
<feature type="disulfide bond" evidence="1">
    <location>
        <begin position="48"/>
        <end position="74"/>
    </location>
</feature>
<feature type="disulfide bond" evidence="1">
    <location>
        <begin position="50"/>
        <end position="90"/>
    </location>
</feature>
<gene>
    <name type="primary">CXCL6</name>
    <name type="synonym">GCP2</name>
    <name type="synonym">SCYB6</name>
</gene>
<comment type="function">
    <text evidence="1">Chemotactic for neutrophil granulocytes. Signals through binding and activation of its receptors (CXCR1 and CXCR2). In addition to its chemotactic and angiogenic properties, it has strong antibacterial activity against Gram-positive and Gram-negative bacteria (90-fold-higher when compared to CXCL5 and CXCL7) (By similarity).</text>
</comment>
<comment type="subcellular location">
    <subcellularLocation>
        <location evidence="1">Secreted</location>
    </subcellularLocation>
</comment>
<comment type="similarity">
    <text evidence="2">Belongs to the intercrine alpha (chemokine CxC) family.</text>
</comment>
<proteinExistence type="inferred from homology"/>